<dbReference type="EC" id="2.6.1.42"/>
<dbReference type="EMBL" id="AL123456">
    <property type="protein sequence ID" value="CCP44987.1"/>
    <property type="molecule type" value="Genomic_DNA"/>
</dbReference>
<dbReference type="PIR" id="C70786">
    <property type="entry name" value="C70786"/>
</dbReference>
<dbReference type="RefSeq" id="NP_216726.1">
    <property type="nucleotide sequence ID" value="NC_000962.3"/>
</dbReference>
<dbReference type="RefSeq" id="WP_003411438.1">
    <property type="nucleotide sequence ID" value="NZ_NVQJ01000008.1"/>
</dbReference>
<dbReference type="PDB" id="3HT5">
    <property type="method" value="X-ray"/>
    <property type="resolution" value="1.90 A"/>
    <property type="chains" value="A=1-368"/>
</dbReference>
<dbReference type="PDB" id="5U3F">
    <property type="method" value="X-ray"/>
    <property type="resolution" value="1.70 A"/>
    <property type="chains" value="A/B=1-368"/>
</dbReference>
<dbReference type="PDBsum" id="3HT5"/>
<dbReference type="PDBsum" id="5U3F"/>
<dbReference type="SMR" id="P9WQ75"/>
<dbReference type="FunCoup" id="P9WQ75">
    <property type="interactions" value="484"/>
</dbReference>
<dbReference type="STRING" id="83332.Rv2210c"/>
<dbReference type="PaxDb" id="83332-Rv2210c"/>
<dbReference type="DNASU" id="888352"/>
<dbReference type="GeneID" id="888352"/>
<dbReference type="KEGG" id="mtu:Rv2210c"/>
<dbReference type="KEGG" id="mtv:RVBD_2210c"/>
<dbReference type="TubercuList" id="Rv2210c"/>
<dbReference type="eggNOG" id="COG0115">
    <property type="taxonomic scope" value="Bacteria"/>
</dbReference>
<dbReference type="InParanoid" id="P9WQ75"/>
<dbReference type="OrthoDB" id="9804984at2"/>
<dbReference type="PhylomeDB" id="P9WQ75"/>
<dbReference type="BRENDA" id="2.6.1.42">
    <property type="organism ID" value="3445"/>
</dbReference>
<dbReference type="UniPathway" id="UPA00047">
    <property type="reaction ID" value="UER00058"/>
</dbReference>
<dbReference type="UniPathway" id="UPA00048">
    <property type="reaction ID" value="UER00073"/>
</dbReference>
<dbReference type="UniPathway" id="UPA00049">
    <property type="reaction ID" value="UER00062"/>
</dbReference>
<dbReference type="EvolutionaryTrace" id="P9WQ75"/>
<dbReference type="Proteomes" id="UP000001584">
    <property type="component" value="Chromosome"/>
</dbReference>
<dbReference type="GO" id="GO:0004084">
    <property type="term" value="F:branched-chain-amino-acid transaminase activity"/>
    <property type="evidence" value="ECO:0000314"/>
    <property type="project" value="UniProtKB"/>
</dbReference>
<dbReference type="GO" id="GO:0052656">
    <property type="term" value="F:L-isoleucine-2-oxoglutarate transaminase activity"/>
    <property type="evidence" value="ECO:0007669"/>
    <property type="project" value="RHEA"/>
</dbReference>
<dbReference type="GO" id="GO:0052654">
    <property type="term" value="F:L-leucine-2-oxoglutarate transaminase activity"/>
    <property type="evidence" value="ECO:0007669"/>
    <property type="project" value="RHEA"/>
</dbReference>
<dbReference type="GO" id="GO:0052655">
    <property type="term" value="F:L-valine-2-oxoglutarate transaminase activity"/>
    <property type="evidence" value="ECO:0007669"/>
    <property type="project" value="RHEA"/>
</dbReference>
<dbReference type="GO" id="GO:0030170">
    <property type="term" value="F:pyridoxal phosphate binding"/>
    <property type="evidence" value="ECO:0000314"/>
    <property type="project" value="MTBBASE"/>
</dbReference>
<dbReference type="GO" id="GO:0009082">
    <property type="term" value="P:branched-chain amino acid biosynthetic process"/>
    <property type="evidence" value="ECO:0000314"/>
    <property type="project" value="MTBBASE"/>
</dbReference>
<dbReference type="GO" id="GO:0009081">
    <property type="term" value="P:branched-chain amino acid metabolic process"/>
    <property type="evidence" value="ECO:0000314"/>
    <property type="project" value="UniProtKB"/>
</dbReference>
<dbReference type="GO" id="GO:0009097">
    <property type="term" value="P:isoleucine biosynthetic process"/>
    <property type="evidence" value="ECO:0007669"/>
    <property type="project" value="UniProtKB-UniPathway"/>
</dbReference>
<dbReference type="GO" id="GO:0009098">
    <property type="term" value="P:L-leucine biosynthetic process"/>
    <property type="evidence" value="ECO:0007669"/>
    <property type="project" value="UniProtKB-UniPathway"/>
</dbReference>
<dbReference type="GO" id="GO:0071267">
    <property type="term" value="P:L-methionine salvage"/>
    <property type="evidence" value="ECO:0000314"/>
    <property type="project" value="MTBBASE"/>
</dbReference>
<dbReference type="GO" id="GO:0009099">
    <property type="term" value="P:L-valine biosynthetic process"/>
    <property type="evidence" value="ECO:0007669"/>
    <property type="project" value="UniProtKB-UniPathway"/>
</dbReference>
<dbReference type="GO" id="GO:0018272">
    <property type="term" value="P:protein-pyridoxal-5-phosphate linkage via peptidyl-N6-pyridoxal phosphate-L-lysine"/>
    <property type="evidence" value="ECO:0000314"/>
    <property type="project" value="UniProtKB"/>
</dbReference>
<dbReference type="CDD" id="cd01557">
    <property type="entry name" value="BCAT_beta_family"/>
    <property type="match status" value="1"/>
</dbReference>
<dbReference type="FunFam" id="3.20.10.10:FF:000009">
    <property type="entry name" value="Branched-chain-amino-acid aminotransferase"/>
    <property type="match status" value="1"/>
</dbReference>
<dbReference type="Gene3D" id="3.30.470.10">
    <property type="match status" value="1"/>
</dbReference>
<dbReference type="Gene3D" id="3.20.10.10">
    <property type="entry name" value="D-amino Acid Aminotransferase, subunit A, domain 2"/>
    <property type="match status" value="1"/>
</dbReference>
<dbReference type="InterPro" id="IPR001544">
    <property type="entry name" value="Aminotrans_IV"/>
</dbReference>
<dbReference type="InterPro" id="IPR018300">
    <property type="entry name" value="Aminotrans_IV_CS"/>
</dbReference>
<dbReference type="InterPro" id="IPR036038">
    <property type="entry name" value="Aminotransferase-like"/>
</dbReference>
<dbReference type="InterPro" id="IPR005786">
    <property type="entry name" value="B_amino_transII"/>
</dbReference>
<dbReference type="InterPro" id="IPR043132">
    <property type="entry name" value="BCAT-like_C"/>
</dbReference>
<dbReference type="InterPro" id="IPR043131">
    <property type="entry name" value="BCAT-like_N"/>
</dbReference>
<dbReference type="InterPro" id="IPR033939">
    <property type="entry name" value="BCAT_family"/>
</dbReference>
<dbReference type="NCBIfam" id="TIGR01123">
    <property type="entry name" value="ilvE_II"/>
    <property type="match status" value="1"/>
</dbReference>
<dbReference type="NCBIfam" id="NF009897">
    <property type="entry name" value="PRK13357.1"/>
    <property type="match status" value="1"/>
</dbReference>
<dbReference type="PANTHER" id="PTHR11825:SF44">
    <property type="entry name" value="BRANCHED-CHAIN-AMINO-ACID AMINOTRANSFERASE"/>
    <property type="match status" value="1"/>
</dbReference>
<dbReference type="PANTHER" id="PTHR11825">
    <property type="entry name" value="SUBGROUP IIII AMINOTRANSFERASE"/>
    <property type="match status" value="1"/>
</dbReference>
<dbReference type="Pfam" id="PF01063">
    <property type="entry name" value="Aminotran_4"/>
    <property type="match status" value="1"/>
</dbReference>
<dbReference type="PIRSF" id="PIRSF006468">
    <property type="entry name" value="BCAT1"/>
    <property type="match status" value="1"/>
</dbReference>
<dbReference type="SUPFAM" id="SSF56752">
    <property type="entry name" value="D-aminoacid aminotransferase-like PLP-dependent enzymes"/>
    <property type="match status" value="1"/>
</dbReference>
<dbReference type="PROSITE" id="PS00770">
    <property type="entry name" value="AA_TRANSFER_CLASS_4"/>
    <property type="match status" value="1"/>
</dbReference>
<comment type="function">
    <text evidence="2">Catalyzes the reversible transfers of an amino group from glutamate to the alpha-ketoacid of the respective amino acid in the final step in the biosynthesis of branchedchain amino acids. The amino acids can be ranked in the following order with respect to their efficiency as amino donor: Leu &gt; Ile &gt; Val.</text>
</comment>
<comment type="catalytic activity">
    <reaction>
        <text>L-leucine + 2-oxoglutarate = 4-methyl-2-oxopentanoate + L-glutamate</text>
        <dbReference type="Rhea" id="RHEA:18321"/>
        <dbReference type="ChEBI" id="CHEBI:16810"/>
        <dbReference type="ChEBI" id="CHEBI:17865"/>
        <dbReference type="ChEBI" id="CHEBI:29985"/>
        <dbReference type="ChEBI" id="CHEBI:57427"/>
        <dbReference type="EC" id="2.6.1.42"/>
    </reaction>
</comment>
<comment type="catalytic activity">
    <reaction>
        <text>L-isoleucine + 2-oxoglutarate = (S)-3-methyl-2-oxopentanoate + L-glutamate</text>
        <dbReference type="Rhea" id="RHEA:24801"/>
        <dbReference type="ChEBI" id="CHEBI:16810"/>
        <dbReference type="ChEBI" id="CHEBI:29985"/>
        <dbReference type="ChEBI" id="CHEBI:35146"/>
        <dbReference type="ChEBI" id="CHEBI:58045"/>
        <dbReference type="EC" id="2.6.1.42"/>
    </reaction>
</comment>
<comment type="catalytic activity">
    <reaction>
        <text>L-valine + 2-oxoglutarate = 3-methyl-2-oxobutanoate + L-glutamate</text>
        <dbReference type="Rhea" id="RHEA:24813"/>
        <dbReference type="ChEBI" id="CHEBI:11851"/>
        <dbReference type="ChEBI" id="CHEBI:16810"/>
        <dbReference type="ChEBI" id="CHEBI:29985"/>
        <dbReference type="ChEBI" id="CHEBI:57762"/>
        <dbReference type="EC" id="2.6.1.42"/>
    </reaction>
</comment>
<comment type="cofactor">
    <cofactor>
        <name>pyridoxal 5'-phosphate</name>
        <dbReference type="ChEBI" id="CHEBI:597326"/>
    </cofactor>
</comment>
<comment type="activity regulation">
    <text evidence="2">Inhibited by ammonium sulfate at millimolar concentrations and by O-benzylhydroxylamine (Obe).</text>
</comment>
<comment type="pathway">
    <text>Amino-acid biosynthesis; L-isoleucine biosynthesis; L-isoleucine from 2-oxobutanoate: step 4/4.</text>
</comment>
<comment type="pathway">
    <text>Amino-acid biosynthesis; L-leucine biosynthesis; L-leucine from 3-methyl-2-oxobutanoate: step 4/4.</text>
</comment>
<comment type="pathway">
    <text>Amino-acid biosynthesis; L-valine biosynthesis; L-valine from pyruvate: step 4/4.</text>
</comment>
<comment type="subunit">
    <text evidence="1">Homodimer.</text>
</comment>
<comment type="similarity">
    <text evidence="3">Belongs to the class-IV pyridoxal-phosphate-dependent aminotransferase family.</text>
</comment>
<accession>P9WQ75</accession>
<accession>L0TBM2</accession>
<accession>Q10399</accession>
<name>ILVE_MYCTU</name>
<protein>
    <recommendedName>
        <fullName>Branched-chain-amino-acid aminotransferase</fullName>
        <shortName>BCAT</shortName>
        <ecNumber>2.6.1.42</ecNumber>
    </recommendedName>
</protein>
<reference key="1">
    <citation type="journal article" date="1998" name="Nature">
        <title>Deciphering the biology of Mycobacterium tuberculosis from the complete genome sequence.</title>
        <authorList>
            <person name="Cole S.T."/>
            <person name="Brosch R."/>
            <person name="Parkhill J."/>
            <person name="Garnier T."/>
            <person name="Churcher C.M."/>
            <person name="Harris D.E."/>
            <person name="Gordon S.V."/>
            <person name="Eiglmeier K."/>
            <person name="Gas S."/>
            <person name="Barry C.E. III"/>
            <person name="Tekaia F."/>
            <person name="Badcock K."/>
            <person name="Basham D."/>
            <person name="Brown D."/>
            <person name="Chillingworth T."/>
            <person name="Connor R."/>
            <person name="Davies R.M."/>
            <person name="Devlin K."/>
            <person name="Feltwell T."/>
            <person name="Gentles S."/>
            <person name="Hamlin N."/>
            <person name="Holroyd S."/>
            <person name="Hornsby T."/>
            <person name="Jagels K."/>
            <person name="Krogh A."/>
            <person name="McLean J."/>
            <person name="Moule S."/>
            <person name="Murphy L.D."/>
            <person name="Oliver S."/>
            <person name="Osborne J."/>
            <person name="Quail M.A."/>
            <person name="Rajandream M.A."/>
            <person name="Rogers J."/>
            <person name="Rutter S."/>
            <person name="Seeger K."/>
            <person name="Skelton S."/>
            <person name="Squares S."/>
            <person name="Squares R."/>
            <person name="Sulston J.E."/>
            <person name="Taylor K."/>
            <person name="Whitehead S."/>
            <person name="Barrell B.G."/>
        </authorList>
    </citation>
    <scope>NUCLEOTIDE SEQUENCE [LARGE SCALE GENOMIC DNA]</scope>
    <source>
        <strain>ATCC 25618 / H37Rv</strain>
    </source>
</reference>
<reference key="2">
    <citation type="journal article" date="2010" name="Acta Crystallogr. D">
        <title>Structural analysis of mycobacterial branched-chain aminotransferase: implications for inhibitor design.</title>
        <authorList>
            <person name="Castell A."/>
            <person name="Mille C."/>
            <person name="Unge T."/>
        </authorList>
    </citation>
    <scope>FUNCTION AS AN AMINOTRANSFERASE</scope>
    <scope>ACTIVITY REGULATION</scope>
    <source>
        <strain>ATCC 25618 / H37Rv</strain>
    </source>
</reference>
<reference key="3">
    <citation type="journal article" date="2011" name="Mol. Cell. Proteomics">
        <title>Proteogenomic analysis of Mycobacterium tuberculosis by high resolution mass spectrometry.</title>
        <authorList>
            <person name="Kelkar D.S."/>
            <person name="Kumar D."/>
            <person name="Kumar P."/>
            <person name="Balakrishnan L."/>
            <person name="Muthusamy B."/>
            <person name="Yadav A.K."/>
            <person name="Shrivastava P."/>
            <person name="Marimuthu A."/>
            <person name="Anand S."/>
            <person name="Sundaram H."/>
            <person name="Kingsbury R."/>
            <person name="Harsha H.C."/>
            <person name="Nair B."/>
            <person name="Prasad T.S."/>
            <person name="Chauhan D.S."/>
            <person name="Katoch K."/>
            <person name="Katoch V.M."/>
            <person name="Kumar P."/>
            <person name="Chaerkady R."/>
            <person name="Ramachandran S."/>
            <person name="Dash D."/>
            <person name="Pandey A."/>
        </authorList>
    </citation>
    <scope>IDENTIFICATION BY MASS SPECTROMETRY [LARGE SCALE ANALYSIS]</scope>
    <source>
        <strain>ATCC 25618 / H37Rv</strain>
    </source>
</reference>
<reference key="4">
    <citation type="journal article" date="2009" name="Acta Crystallogr. F">
        <title>The 1.9 A structure of the branched-chain amino-acid transaminase (IlvE) from Mycobacterium tuberculosis.</title>
        <authorList>
            <person name="Tremblay L.W."/>
            <person name="Blanchard J.S."/>
        </authorList>
    </citation>
    <scope>X-RAY CRYSTALLOGRAPHY (1.9 ANGSTROMS) IN COMPLEX WITH PYRIDOXAMINE-5'-PHOSPHATE</scope>
    <scope>SUBUNIT</scope>
</reference>
<organism>
    <name type="scientific">Mycobacterium tuberculosis (strain ATCC 25618 / H37Rv)</name>
    <dbReference type="NCBI Taxonomy" id="83332"/>
    <lineage>
        <taxon>Bacteria</taxon>
        <taxon>Bacillati</taxon>
        <taxon>Actinomycetota</taxon>
        <taxon>Actinomycetes</taxon>
        <taxon>Mycobacteriales</taxon>
        <taxon>Mycobacteriaceae</taxon>
        <taxon>Mycobacterium</taxon>
        <taxon>Mycobacterium tuberculosis complex</taxon>
    </lineage>
</organism>
<keyword id="KW-0002">3D-structure</keyword>
<keyword id="KW-0028">Amino-acid biosynthesis</keyword>
<keyword id="KW-0032">Aminotransferase</keyword>
<keyword id="KW-0100">Branched-chain amino acid biosynthesis</keyword>
<keyword id="KW-0663">Pyridoxal phosphate</keyword>
<keyword id="KW-1185">Reference proteome</keyword>
<keyword id="KW-0808">Transferase</keyword>
<proteinExistence type="evidence at protein level"/>
<feature type="chain" id="PRO_0000103274" description="Branched-chain-amino-acid aminotransferase">
    <location>
        <begin position="1"/>
        <end position="368"/>
    </location>
</feature>
<feature type="binding site">
    <location>
        <position position="101"/>
    </location>
    <ligand>
        <name>pyridoxal 5'-phosphate</name>
        <dbReference type="ChEBI" id="CHEBI:597326"/>
    </ligand>
</feature>
<feature type="binding site">
    <location>
        <position position="209"/>
    </location>
    <ligand>
        <name>pyridoxal 5'-phosphate</name>
        <dbReference type="ChEBI" id="CHEBI:597326"/>
    </ligand>
</feature>
<feature type="binding site">
    <location>
        <begin position="271"/>
        <end position="272"/>
    </location>
    <ligand>
        <name>pyridoxal 5'-phosphate</name>
        <dbReference type="ChEBI" id="CHEBI:597326"/>
    </ligand>
</feature>
<feature type="binding site">
    <location>
        <position position="314"/>
    </location>
    <ligand>
        <name>pyridoxal 5'-phosphate</name>
        <dbReference type="ChEBI" id="CHEBI:597326"/>
    </ligand>
</feature>
<feature type="modified residue" description="N6-(pyridoxal phosphate)lysine">
    <location>
        <position position="204"/>
    </location>
</feature>
<feature type="strand" evidence="5">
    <location>
        <begin position="37"/>
        <end position="45"/>
    </location>
</feature>
<feature type="turn" evidence="5">
    <location>
        <begin position="46"/>
        <end position="48"/>
    </location>
</feature>
<feature type="strand" evidence="5">
    <location>
        <begin position="49"/>
        <end position="58"/>
    </location>
</feature>
<feature type="strand" evidence="5">
    <location>
        <begin position="61"/>
        <end position="63"/>
    </location>
</feature>
<feature type="helix" evidence="5">
    <location>
        <begin position="69"/>
        <end position="72"/>
    </location>
</feature>
<feature type="strand" evidence="5">
    <location>
        <begin position="75"/>
        <end position="77"/>
    </location>
</feature>
<feature type="strand" evidence="5">
    <location>
        <begin position="80"/>
        <end position="84"/>
    </location>
</feature>
<feature type="strand" evidence="5">
    <location>
        <begin position="90"/>
        <end position="94"/>
    </location>
</feature>
<feature type="helix" evidence="5">
    <location>
        <begin position="95"/>
        <end position="108"/>
    </location>
</feature>
<feature type="helix" evidence="5">
    <location>
        <begin position="116"/>
        <end position="130"/>
    </location>
</feature>
<feature type="helix" evidence="5">
    <location>
        <begin position="131"/>
        <end position="133"/>
    </location>
</feature>
<feature type="strand" evidence="4">
    <location>
        <begin position="137"/>
        <end position="140"/>
    </location>
</feature>
<feature type="strand" evidence="5">
    <location>
        <begin position="142"/>
        <end position="151"/>
    </location>
</feature>
<feature type="strand" evidence="5">
    <location>
        <begin position="157"/>
        <end position="159"/>
    </location>
</feature>
<feature type="strand" evidence="5">
    <location>
        <begin position="162"/>
        <end position="173"/>
    </location>
</feature>
<feature type="strand" evidence="5">
    <location>
        <begin position="184"/>
        <end position="188"/>
    </location>
</feature>
<feature type="helix" evidence="5">
    <location>
        <begin position="206"/>
        <end position="210"/>
    </location>
</feature>
<feature type="helix" evidence="5">
    <location>
        <begin position="213"/>
        <end position="220"/>
    </location>
</feature>
<feature type="turn" evidence="5">
    <location>
        <begin position="221"/>
        <end position="223"/>
    </location>
</feature>
<feature type="strand" evidence="5">
    <location>
        <begin position="225"/>
        <end position="230"/>
    </location>
</feature>
<feature type="turn" evidence="5">
    <location>
        <begin position="232"/>
        <end position="234"/>
    </location>
</feature>
<feature type="strand" evidence="5">
    <location>
        <begin position="237"/>
        <end position="243"/>
    </location>
</feature>
<feature type="strand" evidence="5">
    <location>
        <begin position="245"/>
        <end position="251"/>
    </location>
</feature>
<feature type="helix" evidence="5">
    <location>
        <begin position="253"/>
        <end position="255"/>
    </location>
</feature>
<feature type="strand" evidence="5">
    <location>
        <begin position="257"/>
        <end position="261"/>
    </location>
</feature>
<feature type="strand" evidence="5">
    <location>
        <begin position="265"/>
        <end position="267"/>
    </location>
</feature>
<feature type="helix" evidence="5">
    <location>
        <begin position="271"/>
        <end position="282"/>
    </location>
</feature>
<feature type="strand" evidence="5">
    <location>
        <begin position="286"/>
        <end position="290"/>
    </location>
</feature>
<feature type="helix" evidence="5">
    <location>
        <begin position="294"/>
        <end position="302"/>
    </location>
</feature>
<feature type="strand" evidence="5">
    <location>
        <begin position="305"/>
        <end position="313"/>
    </location>
</feature>
<feature type="turn" evidence="5">
    <location>
        <begin position="314"/>
        <end position="316"/>
    </location>
</feature>
<feature type="strand" evidence="5">
    <location>
        <begin position="317"/>
        <end position="326"/>
    </location>
</feature>
<feature type="strand" evidence="5">
    <location>
        <begin position="329"/>
        <end position="333"/>
    </location>
</feature>
<feature type="helix" evidence="5">
    <location>
        <begin position="340"/>
        <end position="353"/>
    </location>
</feature>
<feature type="strand" evidence="5">
    <location>
        <begin position="364"/>
        <end position="366"/>
    </location>
</feature>
<evidence type="ECO:0000269" key="1">
    <source>
    </source>
</evidence>
<evidence type="ECO:0000269" key="2">
    <source>
    </source>
</evidence>
<evidence type="ECO:0000305" key="3"/>
<evidence type="ECO:0007829" key="4">
    <source>
        <dbReference type="PDB" id="3HT5"/>
    </source>
</evidence>
<evidence type="ECO:0007829" key="5">
    <source>
        <dbReference type="PDB" id="5U3F"/>
    </source>
</evidence>
<gene>
    <name type="primary">ilvE</name>
    <name type="ordered locus">Rv2210c</name>
    <name type="ORF">MTCY190.21c</name>
</gene>
<sequence>MTSGSLQFTVLRAVNPATDAQRESMLREPGFGKYHTDHMVSIDYAEGRGWHNARVIPYGPIELDPSAIVLHYAQEVFEGLKAYRWADGSIVSFRADANAARLRSSARRLAIPELPDAVFIESLRQLIAVDKAWVPGAGGEEALYLRPFIFATEPGLGVRPATQYRYLLIASPAGAYFKGGIAPVSVWVSTEYVRACPGGTGAAKFGGNYAASLLAQAEAAENGCDQVVWLDAVERRYIEEMGGMNIFFVLGSGGSARLVTPELSGSLLPGITRDSLLQLAIDAGFAVEERRIDIDEWQKKAAAGEITEVFACGTAAVITPVARVRHGASEFRIADGQPGEVTMALRDTLTGIQRGTFADTHGWMARLG</sequence>